<comment type="function">
    <text evidence="1 2">Protein involved in mitophagy (PubMed:30982665). Accumulates on the mitochondria surface in response to mitochondrial depolarization and acts as a 'eat me' signal by recruiting proteins involved in selective autophagy (By similarity).</text>
</comment>
<comment type="subcellular location">
    <subcellularLocation>
        <location evidence="1">Mitochondrion matrix</location>
    </subcellularLocation>
</comment>
<comment type="disruption phenotype">
    <text evidence="2">Morpholino knockdown of the protein causes impaired mitophagy.</text>
</comment>
<comment type="similarity">
    <text evidence="4">Belongs to the NipSnap family.</text>
</comment>
<gene>
    <name evidence="3 5" type="primary">nipsnap1</name>
</gene>
<sequence>MMATARPLQLLNTQQHFLNNVLAAWLARGFANKSDEGWLSSMFAHKVDARKDAHSNLLSKKETSNLYKIQFHNVKPEYMEEYNKLSDEVQKELHHDTDYPCEVVGSWNTWYGEQDQAVHLWRYSGGYPALTECLRKLNLNTAYLAFRKERSKMLLSRRNQLLLEFSFWNEPVPRSGSNIYELRSYQLLPGTMIEWGNHWARAIKYRQENNEAVGGFFTQIGDLYVVHHLWAYKDLQSREETRKAAWEKEGWDVSVHYTMPLIQKMESRIMIPMVHSPLQ</sequence>
<protein>
    <recommendedName>
        <fullName>Protein NipSnap homolog 1</fullName>
        <shortName>NipSnap1</shortName>
    </recommendedName>
</protein>
<accession>F6NVH9</accession>
<accession>A0A8N1TSJ0</accession>
<feature type="transit peptide" description="Mitochondrion" evidence="4">
    <location>
        <begin position="1"/>
        <end status="unknown"/>
    </location>
</feature>
<feature type="chain" id="PRO_0000460601" description="Protein NipSnap homolog 1">
    <location>
        <begin status="unknown"/>
        <end position="279"/>
    </location>
</feature>
<proteinExistence type="inferred from homology"/>
<organism>
    <name type="scientific">Danio rerio</name>
    <name type="common">Zebrafish</name>
    <name type="synonym">Brachydanio rerio</name>
    <dbReference type="NCBI Taxonomy" id="7955"/>
    <lineage>
        <taxon>Eukaryota</taxon>
        <taxon>Metazoa</taxon>
        <taxon>Chordata</taxon>
        <taxon>Craniata</taxon>
        <taxon>Vertebrata</taxon>
        <taxon>Euteleostomi</taxon>
        <taxon>Actinopterygii</taxon>
        <taxon>Neopterygii</taxon>
        <taxon>Teleostei</taxon>
        <taxon>Ostariophysi</taxon>
        <taxon>Cypriniformes</taxon>
        <taxon>Danionidae</taxon>
        <taxon>Danioninae</taxon>
        <taxon>Danio</taxon>
    </lineage>
</organism>
<evidence type="ECO:0000250" key="1">
    <source>
        <dbReference type="UniProtKB" id="Q9BPW8"/>
    </source>
</evidence>
<evidence type="ECO:0000269" key="2">
    <source>
    </source>
</evidence>
<evidence type="ECO:0000303" key="3">
    <source>
    </source>
</evidence>
<evidence type="ECO:0000305" key="4"/>
<evidence type="ECO:0000312" key="5">
    <source>
        <dbReference type="ZFIN" id="ZDB-GENE-991008-17"/>
    </source>
</evidence>
<keyword id="KW-0072">Autophagy</keyword>
<keyword id="KW-0496">Mitochondrion</keyword>
<keyword id="KW-1185">Reference proteome</keyword>
<keyword id="KW-0809">Transit peptide</keyword>
<reference key="1">
    <citation type="journal article" date="2013" name="Nature">
        <title>The zebrafish reference genome sequence and its relationship to the human genome.</title>
        <authorList>
            <person name="Howe K."/>
            <person name="Clark M.D."/>
            <person name="Torroja C.F."/>
            <person name="Torrance J."/>
            <person name="Berthelot C."/>
            <person name="Muffato M."/>
            <person name="Collins J.E."/>
            <person name="Humphray S."/>
            <person name="McLaren K."/>
            <person name="Matthews L."/>
            <person name="McLaren S."/>
            <person name="Sealy I."/>
            <person name="Caccamo M."/>
            <person name="Churcher C."/>
            <person name="Scott C."/>
            <person name="Barrett J.C."/>
            <person name="Koch R."/>
            <person name="Rauch G.J."/>
            <person name="White S."/>
            <person name="Chow W."/>
            <person name="Kilian B."/>
            <person name="Quintais L.T."/>
            <person name="Guerra-Assuncao J.A."/>
            <person name="Zhou Y."/>
            <person name="Gu Y."/>
            <person name="Yen J."/>
            <person name="Vogel J.H."/>
            <person name="Eyre T."/>
            <person name="Redmond S."/>
            <person name="Banerjee R."/>
            <person name="Chi J."/>
            <person name="Fu B."/>
            <person name="Langley E."/>
            <person name="Maguire S.F."/>
            <person name="Laird G.K."/>
            <person name="Lloyd D."/>
            <person name="Kenyon E."/>
            <person name="Donaldson S."/>
            <person name="Sehra H."/>
            <person name="Almeida-King J."/>
            <person name="Loveland J."/>
            <person name="Trevanion S."/>
            <person name="Jones M."/>
            <person name="Quail M."/>
            <person name="Willey D."/>
            <person name="Hunt A."/>
            <person name="Burton J."/>
            <person name="Sims S."/>
            <person name="McLay K."/>
            <person name="Plumb B."/>
            <person name="Davis J."/>
            <person name="Clee C."/>
            <person name="Oliver K."/>
            <person name="Clark R."/>
            <person name="Riddle C."/>
            <person name="Elliot D."/>
            <person name="Threadgold G."/>
            <person name="Harden G."/>
            <person name="Ware D."/>
            <person name="Begum S."/>
            <person name="Mortimore B."/>
            <person name="Kerry G."/>
            <person name="Heath P."/>
            <person name="Phillimore B."/>
            <person name="Tracey A."/>
            <person name="Corby N."/>
            <person name="Dunn M."/>
            <person name="Johnson C."/>
            <person name="Wood J."/>
            <person name="Clark S."/>
            <person name="Pelan S."/>
            <person name="Griffiths G."/>
            <person name="Smith M."/>
            <person name="Glithero R."/>
            <person name="Howden P."/>
            <person name="Barker N."/>
            <person name="Lloyd C."/>
            <person name="Stevens C."/>
            <person name="Harley J."/>
            <person name="Holt K."/>
            <person name="Panagiotidis G."/>
            <person name="Lovell J."/>
            <person name="Beasley H."/>
            <person name="Henderson C."/>
            <person name="Gordon D."/>
            <person name="Auger K."/>
            <person name="Wright D."/>
            <person name="Collins J."/>
            <person name="Raisen C."/>
            <person name="Dyer L."/>
            <person name="Leung K."/>
            <person name="Robertson L."/>
            <person name="Ambridge K."/>
            <person name="Leongamornlert D."/>
            <person name="McGuire S."/>
            <person name="Gilderthorp R."/>
            <person name="Griffiths C."/>
            <person name="Manthravadi D."/>
            <person name="Nichol S."/>
            <person name="Barker G."/>
            <person name="Whitehead S."/>
            <person name="Kay M."/>
            <person name="Brown J."/>
            <person name="Murnane C."/>
            <person name="Gray E."/>
            <person name="Humphries M."/>
            <person name="Sycamore N."/>
            <person name="Barker D."/>
            <person name="Saunders D."/>
            <person name="Wallis J."/>
            <person name="Babbage A."/>
            <person name="Hammond S."/>
            <person name="Mashreghi-Mohammadi M."/>
            <person name="Barr L."/>
            <person name="Martin S."/>
            <person name="Wray P."/>
            <person name="Ellington A."/>
            <person name="Matthews N."/>
            <person name="Ellwood M."/>
            <person name="Woodmansey R."/>
            <person name="Clark G."/>
            <person name="Cooper J."/>
            <person name="Tromans A."/>
            <person name="Grafham D."/>
            <person name="Skuce C."/>
            <person name="Pandian R."/>
            <person name="Andrews R."/>
            <person name="Harrison E."/>
            <person name="Kimberley A."/>
            <person name="Garnett J."/>
            <person name="Fosker N."/>
            <person name="Hall R."/>
            <person name="Garner P."/>
            <person name="Kelly D."/>
            <person name="Bird C."/>
            <person name="Palmer S."/>
            <person name="Gehring I."/>
            <person name="Berger A."/>
            <person name="Dooley C.M."/>
            <person name="Ersan-Urun Z."/>
            <person name="Eser C."/>
            <person name="Geiger H."/>
            <person name="Geisler M."/>
            <person name="Karotki L."/>
            <person name="Kirn A."/>
            <person name="Konantz J."/>
            <person name="Konantz M."/>
            <person name="Oberlander M."/>
            <person name="Rudolph-Geiger S."/>
            <person name="Teucke M."/>
            <person name="Lanz C."/>
            <person name="Raddatz G."/>
            <person name="Osoegawa K."/>
            <person name="Zhu B."/>
            <person name="Rapp A."/>
            <person name="Widaa S."/>
            <person name="Langford C."/>
            <person name="Yang F."/>
            <person name="Schuster S.C."/>
            <person name="Carter N.P."/>
            <person name="Harrow J."/>
            <person name="Ning Z."/>
            <person name="Herrero J."/>
            <person name="Searle S.M."/>
            <person name="Enright A."/>
            <person name="Geisler R."/>
            <person name="Plasterk R.H."/>
            <person name="Lee C."/>
            <person name="Westerfield M."/>
            <person name="de Jong P.J."/>
            <person name="Zon L.I."/>
            <person name="Postlethwait J.H."/>
            <person name="Nusslein-Volhard C."/>
            <person name="Hubbard T.J."/>
            <person name="Roest Crollius H."/>
            <person name="Rogers J."/>
            <person name="Stemple D.L."/>
        </authorList>
    </citation>
    <scope>NUCLEOTIDE SEQUENCE [LARGE SCALE GENOMIC DNA]</scope>
    <source>
        <strain>Tuebingen</strain>
    </source>
</reference>
<reference key="2">
    <citation type="journal article" date="2019" name="Dev. Cell">
        <title>NIPSNAP1 and NIPSNAP2 act as 'eat me' signals for mitophagy.</title>
        <authorList>
            <person name="Princely Abudu Y."/>
            <person name="Pankiv S."/>
            <person name="Mathai B.J."/>
            <person name="Haakon Lystad A."/>
            <person name="Bindesboell C."/>
            <person name="Brenne H.B."/>
            <person name="Yoke Wui Ng M."/>
            <person name="Thiede B."/>
            <person name="Yamamoto A."/>
            <person name="Mutugi Nthiga T."/>
            <person name="Lamark T."/>
            <person name="Esguerra C.V."/>
            <person name="Johansen T."/>
            <person name="Simonsen A."/>
        </authorList>
    </citation>
    <scope>FUNCTION</scope>
    <scope>DISRUPTION PHENOTYPE</scope>
</reference>
<dbReference type="EMBL" id="CR933780">
    <property type="status" value="NOT_ANNOTATED_CDS"/>
    <property type="molecule type" value="Genomic_DNA"/>
</dbReference>
<dbReference type="RefSeq" id="NP_571108.2">
    <property type="nucleotide sequence ID" value="NM_131033.2"/>
</dbReference>
<dbReference type="SMR" id="F6NVH9"/>
<dbReference type="FunCoup" id="F6NVH9">
    <property type="interactions" value="804"/>
</dbReference>
<dbReference type="STRING" id="7955.ENSDARP00000026717"/>
<dbReference type="PaxDb" id="7955-ENSDARP00000026717"/>
<dbReference type="GeneID" id="30231"/>
<dbReference type="KEGG" id="dre:30231"/>
<dbReference type="AGR" id="ZFIN:ZDB-GENE-991008-17"/>
<dbReference type="CTD" id="8508"/>
<dbReference type="ZFIN" id="ZDB-GENE-991008-17">
    <property type="gene designation" value="nipsnap1"/>
</dbReference>
<dbReference type="eggNOG" id="KOG2883">
    <property type="taxonomic scope" value="Eukaryota"/>
</dbReference>
<dbReference type="OMA" id="YRCSVYL"/>
<dbReference type="OrthoDB" id="10262843at2759"/>
<dbReference type="TreeFam" id="TF314501"/>
<dbReference type="Proteomes" id="UP000000437">
    <property type="component" value="Chromosome 5"/>
</dbReference>
<dbReference type="Bgee" id="ENSDARG00000005320">
    <property type="expression patterns" value="Expressed in liver and 23 other cell types or tissues"/>
</dbReference>
<dbReference type="GO" id="GO:0005759">
    <property type="term" value="C:mitochondrial matrix"/>
    <property type="evidence" value="ECO:0000250"/>
    <property type="project" value="UniProtKB"/>
</dbReference>
<dbReference type="GO" id="GO:0005739">
    <property type="term" value="C:mitochondrion"/>
    <property type="evidence" value="ECO:0000318"/>
    <property type="project" value="GO_Central"/>
</dbReference>
<dbReference type="GO" id="GO:0030674">
    <property type="term" value="F:protein-macromolecule adaptor activity"/>
    <property type="evidence" value="ECO:0000250"/>
    <property type="project" value="UniProtKB"/>
</dbReference>
<dbReference type="GO" id="GO:0000423">
    <property type="term" value="P:mitophagy"/>
    <property type="evidence" value="ECO:0000314"/>
    <property type="project" value="UniProtKB"/>
</dbReference>
<dbReference type="FunFam" id="3.30.70.100:FF:000003">
    <property type="entry name" value="Protein NipSnap homolog 2"/>
    <property type="match status" value="1"/>
</dbReference>
<dbReference type="FunFam" id="3.30.70.100:FF:000007">
    <property type="entry name" value="protein NipSnap homolog 2"/>
    <property type="match status" value="1"/>
</dbReference>
<dbReference type="Gene3D" id="3.30.70.100">
    <property type="match status" value="2"/>
</dbReference>
<dbReference type="InterPro" id="IPR011008">
    <property type="entry name" value="Dimeric_a/b-barrel"/>
</dbReference>
<dbReference type="InterPro" id="IPR012577">
    <property type="entry name" value="NIPSNAP"/>
</dbReference>
<dbReference type="InterPro" id="IPR051557">
    <property type="entry name" value="NipSnap_domain"/>
</dbReference>
<dbReference type="PANTHER" id="PTHR21017">
    <property type="entry name" value="NIPSNAP-RELATED"/>
    <property type="match status" value="1"/>
</dbReference>
<dbReference type="PANTHER" id="PTHR21017:SF11">
    <property type="entry name" value="PROTEIN NIPSNAP HOMOLOG 1"/>
    <property type="match status" value="1"/>
</dbReference>
<dbReference type="Pfam" id="PF07978">
    <property type="entry name" value="NIPSNAP"/>
    <property type="match status" value="1"/>
</dbReference>
<dbReference type="SUPFAM" id="SSF54909">
    <property type="entry name" value="Dimeric alpha+beta barrel"/>
    <property type="match status" value="2"/>
</dbReference>
<name>NIPS1_DANRE</name>